<accession>Q9W549</accession>
<evidence type="ECO:0000250" key="1">
    <source>
        <dbReference type="UniProtKB" id="Q96IL0"/>
    </source>
</evidence>
<evidence type="ECO:0000250" key="2">
    <source>
        <dbReference type="UniProtKB" id="Q9CQW7"/>
    </source>
</evidence>
<evidence type="ECO:0000255" key="3"/>
<evidence type="ECO:0000269" key="4">
    <source>
    </source>
</evidence>
<evidence type="ECO:0000303" key="5">
    <source>
    </source>
</evidence>
<evidence type="ECO:0000305" key="6"/>
<evidence type="ECO:0000312" key="7">
    <source>
        <dbReference type="FlyBase" id="FBgn0029594"/>
    </source>
</evidence>
<proteinExistence type="inferred from homology"/>
<name>COA8_DROME</name>
<gene>
    <name evidence="7" type="primary">coa8</name>
    <name evidence="5" type="synonym">Apop1</name>
    <name evidence="7" type="ORF">CG14806</name>
</gene>
<dbReference type="EMBL" id="AE014298">
    <property type="protein sequence ID" value="AAF45683.1"/>
    <property type="molecule type" value="Genomic_DNA"/>
</dbReference>
<dbReference type="RefSeq" id="NP_001259147.1">
    <property type="nucleotide sequence ID" value="NM_001272218.1"/>
</dbReference>
<dbReference type="RefSeq" id="NP_569956.1">
    <property type="nucleotide sequence ID" value="NM_130600.2"/>
</dbReference>
<dbReference type="SMR" id="Q9W549"/>
<dbReference type="BioGRID" id="57694">
    <property type="interactions" value="4"/>
</dbReference>
<dbReference type="FunCoup" id="Q9W549">
    <property type="interactions" value="681"/>
</dbReference>
<dbReference type="IntAct" id="Q9W549">
    <property type="interactions" value="1"/>
</dbReference>
<dbReference type="STRING" id="7227.FBpp0070300"/>
<dbReference type="PaxDb" id="7227-FBpp0070300"/>
<dbReference type="DNASU" id="31148"/>
<dbReference type="EnsemblMetazoa" id="FBtr0070313">
    <property type="protein sequence ID" value="FBpp0070300"/>
    <property type="gene ID" value="FBgn0029594"/>
</dbReference>
<dbReference type="EnsemblMetazoa" id="FBtr0331384">
    <property type="protein sequence ID" value="FBpp0303802"/>
    <property type="gene ID" value="FBgn0029594"/>
</dbReference>
<dbReference type="GeneID" id="31148"/>
<dbReference type="KEGG" id="dme:Dmel_CG14806"/>
<dbReference type="UCSC" id="CG14806-RA">
    <property type="organism name" value="d. melanogaster"/>
</dbReference>
<dbReference type="AGR" id="FB:FBgn0029594"/>
<dbReference type="CTD" id="84334"/>
<dbReference type="FlyBase" id="FBgn0029594">
    <property type="gene designation" value="Coa8"/>
</dbReference>
<dbReference type="VEuPathDB" id="VectorBase:FBgn0029594"/>
<dbReference type="eggNOG" id="KOG4094">
    <property type="taxonomic scope" value="Eukaryota"/>
</dbReference>
<dbReference type="GeneTree" id="ENSGT00390000008212"/>
<dbReference type="HOGENOM" id="CLU_118274_0_0_1"/>
<dbReference type="InParanoid" id="Q9W549"/>
<dbReference type="OMA" id="AWNQEFW"/>
<dbReference type="OrthoDB" id="6246201at2759"/>
<dbReference type="PhylomeDB" id="Q9W549"/>
<dbReference type="BioGRID-ORCS" id="31148">
    <property type="hits" value="0 hits in 1 CRISPR screen"/>
</dbReference>
<dbReference type="GenomeRNAi" id="31148"/>
<dbReference type="PRO" id="PR:Q9W549"/>
<dbReference type="Proteomes" id="UP000000803">
    <property type="component" value="Chromosome X"/>
</dbReference>
<dbReference type="Bgee" id="FBgn0029594">
    <property type="expression patterns" value="Expressed in transmedullary neuron Tm5c (Drosophila) in brain and 149 other cell types or tissues"/>
</dbReference>
<dbReference type="ExpressionAtlas" id="Q9W549">
    <property type="expression patterns" value="baseline and differential"/>
</dbReference>
<dbReference type="GO" id="GO:0099617">
    <property type="term" value="C:matrix side of mitochondrial inner membrane"/>
    <property type="evidence" value="ECO:0000250"/>
    <property type="project" value="FlyBase"/>
</dbReference>
<dbReference type="GO" id="GO:0031966">
    <property type="term" value="C:mitochondrial membrane"/>
    <property type="evidence" value="ECO:0000314"/>
    <property type="project" value="FlyBase"/>
</dbReference>
<dbReference type="GO" id="GO:0005739">
    <property type="term" value="C:mitochondrion"/>
    <property type="evidence" value="ECO:0000318"/>
    <property type="project" value="GO_Central"/>
</dbReference>
<dbReference type="GO" id="GO:0097193">
    <property type="term" value="P:intrinsic apoptotic signaling pathway"/>
    <property type="evidence" value="ECO:0007669"/>
    <property type="project" value="InterPro"/>
</dbReference>
<dbReference type="InterPro" id="IPR018796">
    <property type="entry name" value="COA8"/>
</dbReference>
<dbReference type="PANTHER" id="PTHR31107">
    <property type="entry name" value="APOPTOGENIC PROTEIN 1, MITOCHONDRIAL"/>
    <property type="match status" value="1"/>
</dbReference>
<dbReference type="PANTHER" id="PTHR31107:SF2">
    <property type="entry name" value="CYTOCHROME C OXIDASE ASSEMBLY FACTOR 8"/>
    <property type="match status" value="1"/>
</dbReference>
<dbReference type="Pfam" id="PF10231">
    <property type="entry name" value="COA8"/>
    <property type="match status" value="1"/>
</dbReference>
<sequence>MNKCFRCQPRISLFQFSLPRCYAAVQPGCPPPQEKPVVGLPHKPDPKTVKCDYIGPPDAQSNLRPYVRHYGDEETRLARSLRLKRIEVEAWNTDFWTKHNKRFYEEKEDFIRLHKESGTSEVSADQMSHFYKAFLDKNWRIHIMYNISWYLKNFDILTLAAAVQLQRLLALAKRRS</sequence>
<keyword id="KW-0472">Membrane</keyword>
<keyword id="KW-0496">Mitochondrion</keyword>
<keyword id="KW-0999">Mitochondrion inner membrane</keyword>
<keyword id="KW-1185">Reference proteome</keyword>
<keyword id="KW-0809">Transit peptide</keyword>
<organism>
    <name type="scientific">Drosophila melanogaster</name>
    <name type="common">Fruit fly</name>
    <dbReference type="NCBI Taxonomy" id="7227"/>
    <lineage>
        <taxon>Eukaryota</taxon>
        <taxon>Metazoa</taxon>
        <taxon>Ecdysozoa</taxon>
        <taxon>Arthropoda</taxon>
        <taxon>Hexapoda</taxon>
        <taxon>Insecta</taxon>
        <taxon>Pterygota</taxon>
        <taxon>Neoptera</taxon>
        <taxon>Endopterygota</taxon>
        <taxon>Diptera</taxon>
        <taxon>Brachycera</taxon>
        <taxon>Muscomorpha</taxon>
        <taxon>Ephydroidea</taxon>
        <taxon>Drosophilidae</taxon>
        <taxon>Drosophila</taxon>
        <taxon>Sophophora</taxon>
    </lineage>
</organism>
<reference key="1">
    <citation type="journal article" date="2000" name="Science">
        <title>The genome sequence of Drosophila melanogaster.</title>
        <authorList>
            <person name="Adams M.D."/>
            <person name="Celniker S.E."/>
            <person name="Holt R.A."/>
            <person name="Evans C.A."/>
            <person name="Gocayne J.D."/>
            <person name="Amanatides P.G."/>
            <person name="Scherer S.E."/>
            <person name="Li P.W."/>
            <person name="Hoskins R.A."/>
            <person name="Galle R.F."/>
            <person name="George R.A."/>
            <person name="Lewis S.E."/>
            <person name="Richards S."/>
            <person name="Ashburner M."/>
            <person name="Henderson S.N."/>
            <person name="Sutton G.G."/>
            <person name="Wortman J.R."/>
            <person name="Yandell M.D."/>
            <person name="Zhang Q."/>
            <person name="Chen L.X."/>
            <person name="Brandon R.C."/>
            <person name="Rogers Y.-H.C."/>
            <person name="Blazej R.G."/>
            <person name="Champe M."/>
            <person name="Pfeiffer B.D."/>
            <person name="Wan K.H."/>
            <person name="Doyle C."/>
            <person name="Baxter E.G."/>
            <person name="Helt G."/>
            <person name="Nelson C.R."/>
            <person name="Miklos G.L.G."/>
            <person name="Abril J.F."/>
            <person name="Agbayani A."/>
            <person name="An H.-J."/>
            <person name="Andrews-Pfannkoch C."/>
            <person name="Baldwin D."/>
            <person name="Ballew R.M."/>
            <person name="Basu A."/>
            <person name="Baxendale J."/>
            <person name="Bayraktaroglu L."/>
            <person name="Beasley E.M."/>
            <person name="Beeson K.Y."/>
            <person name="Benos P.V."/>
            <person name="Berman B.P."/>
            <person name="Bhandari D."/>
            <person name="Bolshakov S."/>
            <person name="Borkova D."/>
            <person name="Botchan M.R."/>
            <person name="Bouck J."/>
            <person name="Brokstein P."/>
            <person name="Brottier P."/>
            <person name="Burtis K.C."/>
            <person name="Busam D.A."/>
            <person name="Butler H."/>
            <person name="Cadieu E."/>
            <person name="Center A."/>
            <person name="Chandra I."/>
            <person name="Cherry J.M."/>
            <person name="Cawley S."/>
            <person name="Dahlke C."/>
            <person name="Davenport L.B."/>
            <person name="Davies P."/>
            <person name="de Pablos B."/>
            <person name="Delcher A."/>
            <person name="Deng Z."/>
            <person name="Mays A.D."/>
            <person name="Dew I."/>
            <person name="Dietz S.M."/>
            <person name="Dodson K."/>
            <person name="Doup L.E."/>
            <person name="Downes M."/>
            <person name="Dugan-Rocha S."/>
            <person name="Dunkov B.C."/>
            <person name="Dunn P."/>
            <person name="Durbin K.J."/>
            <person name="Evangelista C.C."/>
            <person name="Ferraz C."/>
            <person name="Ferriera S."/>
            <person name="Fleischmann W."/>
            <person name="Fosler C."/>
            <person name="Gabrielian A.E."/>
            <person name="Garg N.S."/>
            <person name="Gelbart W.M."/>
            <person name="Glasser K."/>
            <person name="Glodek A."/>
            <person name="Gong F."/>
            <person name="Gorrell J.H."/>
            <person name="Gu Z."/>
            <person name="Guan P."/>
            <person name="Harris M."/>
            <person name="Harris N.L."/>
            <person name="Harvey D.A."/>
            <person name="Heiman T.J."/>
            <person name="Hernandez J.R."/>
            <person name="Houck J."/>
            <person name="Hostin D."/>
            <person name="Houston K.A."/>
            <person name="Howland T.J."/>
            <person name="Wei M.-H."/>
            <person name="Ibegwam C."/>
            <person name="Jalali M."/>
            <person name="Kalush F."/>
            <person name="Karpen G.H."/>
            <person name="Ke Z."/>
            <person name="Kennison J.A."/>
            <person name="Ketchum K.A."/>
            <person name="Kimmel B.E."/>
            <person name="Kodira C.D."/>
            <person name="Kraft C.L."/>
            <person name="Kravitz S."/>
            <person name="Kulp D."/>
            <person name="Lai Z."/>
            <person name="Lasko P."/>
            <person name="Lei Y."/>
            <person name="Levitsky A.A."/>
            <person name="Li J.H."/>
            <person name="Li Z."/>
            <person name="Liang Y."/>
            <person name="Lin X."/>
            <person name="Liu X."/>
            <person name="Mattei B."/>
            <person name="McIntosh T.C."/>
            <person name="McLeod M.P."/>
            <person name="McPherson D."/>
            <person name="Merkulov G."/>
            <person name="Milshina N.V."/>
            <person name="Mobarry C."/>
            <person name="Morris J."/>
            <person name="Moshrefi A."/>
            <person name="Mount S.M."/>
            <person name="Moy M."/>
            <person name="Murphy B."/>
            <person name="Murphy L."/>
            <person name="Muzny D.M."/>
            <person name="Nelson D.L."/>
            <person name="Nelson D.R."/>
            <person name="Nelson K.A."/>
            <person name="Nixon K."/>
            <person name="Nusskern D.R."/>
            <person name="Pacleb J.M."/>
            <person name="Palazzolo M."/>
            <person name="Pittman G.S."/>
            <person name="Pan S."/>
            <person name="Pollard J."/>
            <person name="Puri V."/>
            <person name="Reese M.G."/>
            <person name="Reinert K."/>
            <person name="Remington K."/>
            <person name="Saunders R.D.C."/>
            <person name="Scheeler F."/>
            <person name="Shen H."/>
            <person name="Shue B.C."/>
            <person name="Siden-Kiamos I."/>
            <person name="Simpson M."/>
            <person name="Skupski M.P."/>
            <person name="Smith T.J."/>
            <person name="Spier E."/>
            <person name="Spradling A.C."/>
            <person name="Stapleton M."/>
            <person name="Strong R."/>
            <person name="Sun E."/>
            <person name="Svirskas R."/>
            <person name="Tector C."/>
            <person name="Turner R."/>
            <person name="Venter E."/>
            <person name="Wang A.H."/>
            <person name="Wang X."/>
            <person name="Wang Z.-Y."/>
            <person name="Wassarman D.A."/>
            <person name="Weinstock G.M."/>
            <person name="Weissenbach J."/>
            <person name="Williams S.M."/>
            <person name="Woodage T."/>
            <person name="Worley K.C."/>
            <person name="Wu D."/>
            <person name="Yang S."/>
            <person name="Yao Q.A."/>
            <person name="Ye J."/>
            <person name="Yeh R.-F."/>
            <person name="Zaveri J.S."/>
            <person name="Zhan M."/>
            <person name="Zhang G."/>
            <person name="Zhao Q."/>
            <person name="Zheng L."/>
            <person name="Zheng X.H."/>
            <person name="Zhong F.N."/>
            <person name="Zhong W."/>
            <person name="Zhou X."/>
            <person name="Zhu S.C."/>
            <person name="Zhu X."/>
            <person name="Smith H.O."/>
            <person name="Gibbs R.A."/>
            <person name="Myers E.W."/>
            <person name="Rubin G.M."/>
            <person name="Venter J.C."/>
        </authorList>
    </citation>
    <scope>NUCLEOTIDE SEQUENCE [LARGE SCALE GENOMIC DNA]</scope>
    <source>
        <strain>Berkeley</strain>
    </source>
</reference>
<reference key="2">
    <citation type="journal article" date="2002" name="Genome Biol.">
        <title>Annotation of the Drosophila melanogaster euchromatic genome: a systematic review.</title>
        <authorList>
            <person name="Misra S."/>
            <person name="Crosby M.A."/>
            <person name="Mungall C.J."/>
            <person name="Matthews B.B."/>
            <person name="Campbell K.S."/>
            <person name="Hradecky P."/>
            <person name="Huang Y."/>
            <person name="Kaminker J.S."/>
            <person name="Millburn G.H."/>
            <person name="Prochnik S.E."/>
            <person name="Smith C.D."/>
            <person name="Tupy J.L."/>
            <person name="Whitfield E.J."/>
            <person name="Bayraktaroglu L."/>
            <person name="Berman B.P."/>
            <person name="Bettencourt B.R."/>
            <person name="Celniker S.E."/>
            <person name="de Grey A.D.N.J."/>
            <person name="Drysdale R.A."/>
            <person name="Harris N.L."/>
            <person name="Richter J."/>
            <person name="Russo S."/>
            <person name="Schroeder A.J."/>
            <person name="Shu S.Q."/>
            <person name="Stapleton M."/>
            <person name="Yamada C."/>
            <person name="Ashburner M."/>
            <person name="Gelbart W.M."/>
            <person name="Rubin G.M."/>
            <person name="Lewis S.E."/>
        </authorList>
    </citation>
    <scope>GENOME REANNOTATION</scope>
    <source>
        <strain>Berkeley</strain>
    </source>
</reference>
<reference key="3">
    <citation type="journal article" date="2012" name="Infect. Immun.">
        <title>Identification of critical host mitochondrion-associated genes during Ehrlichia chaffeensis infections.</title>
        <authorList>
            <person name="Von Ohlen T."/>
            <person name="Luce-Fedrow A."/>
            <person name="Ortega M.T."/>
            <person name="Ganta R.R."/>
            <person name="Chapes S.K."/>
        </authorList>
    </citation>
    <scope>FUNCTION (MICROBIAL INFECTION)</scope>
    <scope>DISRUPTION PHENOTYPE (MICROBIAL INFECTION)</scope>
</reference>
<protein>
    <recommendedName>
        <fullName evidence="6">COA8 family protein CG14806, mitochondrial</fullName>
        <shortName evidence="6">COA8</shortName>
    </recommendedName>
    <alternativeName>
        <fullName evidence="5">APOPT1 family protein CG14806, mitochondrial</fullName>
    </alternativeName>
    <alternativeName>
        <fullName evidence="7">Cytochrome c oxidase assembly factor 8</fullName>
    </alternativeName>
</protein>
<feature type="transit peptide" description="Mitochondrion" evidence="3">
    <location>
        <begin position="1"/>
        <end position="23"/>
    </location>
</feature>
<feature type="chain" id="PRO_0000353110" description="COA8 family protein CG14806, mitochondrial">
    <location>
        <begin position="24"/>
        <end position="176"/>
    </location>
</feature>
<comment type="function">
    <text evidence="1">May be required for cytochrome c complex (COX) assembly and function, COX being the terminal component of the mitochondrial respiratory chain.</text>
</comment>
<comment type="function">
    <text evidence="4">(Microbial infection) Required for optimal replication of E.chaffeensis.</text>
</comment>
<comment type="subcellular location">
    <subcellularLocation>
        <location evidence="2">Mitochondrion inner membrane</location>
        <topology evidence="1">Peripheral membrane protein</topology>
        <orientation evidence="1">Matrix side</orientation>
    </subcellularLocation>
</comment>
<comment type="disruption phenotype">
    <text evidence="4">(Microbial infection) After infection with E.chaffeensis, results in reduced bacterial replication rate and increased survival.</text>
</comment>
<comment type="similarity">
    <text evidence="6">Belongs to the COA8 family.</text>
</comment>